<name>RPP40_RAT</name>
<evidence type="ECO:0000250" key="1">
    <source>
        <dbReference type="UniProtKB" id="O75818"/>
    </source>
</evidence>
<evidence type="ECO:0000303" key="2">
    <source>
    </source>
</evidence>
<evidence type="ECO:0000305" key="3"/>
<organism>
    <name type="scientific">Rattus norvegicus</name>
    <name type="common">Rat</name>
    <dbReference type="NCBI Taxonomy" id="10116"/>
    <lineage>
        <taxon>Eukaryota</taxon>
        <taxon>Metazoa</taxon>
        <taxon>Chordata</taxon>
        <taxon>Craniata</taxon>
        <taxon>Vertebrata</taxon>
        <taxon>Euteleostomi</taxon>
        <taxon>Mammalia</taxon>
        <taxon>Eutheria</taxon>
        <taxon>Euarchontoglires</taxon>
        <taxon>Glires</taxon>
        <taxon>Rodentia</taxon>
        <taxon>Myomorpha</taxon>
        <taxon>Muroidea</taxon>
        <taxon>Muridae</taxon>
        <taxon>Murinae</taxon>
        <taxon>Rattus</taxon>
    </lineage>
</organism>
<proteinExistence type="evidence at transcript level"/>
<dbReference type="EMBL" id="AABR03105027">
    <property type="status" value="NOT_ANNOTATED_CDS"/>
    <property type="molecule type" value="mRNA"/>
</dbReference>
<dbReference type="EMBL" id="BC091191">
    <property type="protein sequence ID" value="AAH91191.1"/>
    <property type="molecule type" value="mRNA"/>
</dbReference>
<dbReference type="RefSeq" id="NP_001013073.1">
    <molecule id="Q5BK64-2"/>
    <property type="nucleotide sequence ID" value="NM_001013055.2"/>
</dbReference>
<dbReference type="RefSeq" id="NP_001386283.1">
    <molecule id="Q5BK64-1"/>
    <property type="nucleotide sequence ID" value="NM_001399354.1"/>
</dbReference>
<dbReference type="RefSeq" id="XP_006253852.1">
    <property type="nucleotide sequence ID" value="XM_006253790.2"/>
</dbReference>
<dbReference type="SMR" id="Q5BK64"/>
<dbReference type="FunCoup" id="Q5BK64">
    <property type="interactions" value="690"/>
</dbReference>
<dbReference type="STRING" id="10116.ENSRNOP00000062962"/>
<dbReference type="PhosphoSitePlus" id="Q5BK64"/>
<dbReference type="jPOST" id="Q5BK64"/>
<dbReference type="PaxDb" id="10116-ENSRNOP00000062962"/>
<dbReference type="Ensembl" id="ENSRNOT00000021877.6">
    <molecule id="Q5BK64-2"/>
    <property type="protein sequence ID" value="ENSRNOP00000021877.4"/>
    <property type="gene ID" value="ENSRNOG00000016226.8"/>
</dbReference>
<dbReference type="GeneID" id="291071"/>
<dbReference type="KEGG" id="rno:291071"/>
<dbReference type="UCSC" id="RGD:1310228">
    <molecule id="Q5BK64-1"/>
    <property type="organism name" value="rat"/>
</dbReference>
<dbReference type="AGR" id="RGD:1310228"/>
<dbReference type="CTD" id="10799"/>
<dbReference type="RGD" id="1310228">
    <property type="gene designation" value="Rpp40"/>
</dbReference>
<dbReference type="VEuPathDB" id="HostDB:ENSRNOG00000016226"/>
<dbReference type="eggNOG" id="ENOG502QSAV">
    <property type="taxonomic scope" value="Eukaryota"/>
</dbReference>
<dbReference type="GeneTree" id="ENSGT00390000014167"/>
<dbReference type="HOGENOM" id="CLU_065211_0_0_1"/>
<dbReference type="InParanoid" id="Q5BK64"/>
<dbReference type="PhylomeDB" id="Q5BK64"/>
<dbReference type="TreeFam" id="TF330967"/>
<dbReference type="Reactome" id="R-RNO-6791226">
    <property type="pathway name" value="Major pathway of rRNA processing in the nucleolus and cytosol"/>
</dbReference>
<dbReference type="PRO" id="PR:Q5BK64"/>
<dbReference type="Proteomes" id="UP000002494">
    <property type="component" value="Chromosome 17"/>
</dbReference>
<dbReference type="Bgee" id="ENSRNOG00000016226">
    <property type="expression patterns" value="Expressed in spleen and 19 other cell types or tissues"/>
</dbReference>
<dbReference type="GO" id="GO:0030681">
    <property type="term" value="C:multimeric ribonuclease P complex"/>
    <property type="evidence" value="ECO:0000250"/>
    <property type="project" value="UniProtKB"/>
</dbReference>
<dbReference type="GO" id="GO:0005730">
    <property type="term" value="C:nucleolus"/>
    <property type="evidence" value="ECO:0007669"/>
    <property type="project" value="UniProtKB-SubCell"/>
</dbReference>
<dbReference type="GO" id="GO:0000172">
    <property type="term" value="C:ribonuclease MRP complex"/>
    <property type="evidence" value="ECO:0000318"/>
    <property type="project" value="GO_Central"/>
</dbReference>
<dbReference type="GO" id="GO:0004526">
    <property type="term" value="F:ribonuclease P activity"/>
    <property type="evidence" value="ECO:0007669"/>
    <property type="project" value="UniProtKB-EC"/>
</dbReference>
<dbReference type="GO" id="GO:0033204">
    <property type="term" value="F:ribonuclease P RNA binding"/>
    <property type="evidence" value="ECO:0000250"/>
    <property type="project" value="UniProtKB"/>
</dbReference>
<dbReference type="GO" id="GO:0000447">
    <property type="term" value="P:endonucleolytic cleavage in ITS1 to separate SSU-rRNA from 5.8S rRNA and LSU-rRNA from tricistronic rRNA transcript (SSU-rRNA, 5.8S rRNA, LSU-rRNA)"/>
    <property type="evidence" value="ECO:0000318"/>
    <property type="project" value="GO_Central"/>
</dbReference>
<dbReference type="GO" id="GO:0001682">
    <property type="term" value="P:tRNA 5'-leader removal"/>
    <property type="evidence" value="ECO:0000250"/>
    <property type="project" value="UniProtKB"/>
</dbReference>
<dbReference type="InterPro" id="IPR013893">
    <property type="entry name" value="RNase_P_Rpp40"/>
</dbReference>
<dbReference type="PANTHER" id="PTHR15396">
    <property type="entry name" value="RIBONUCLEASE P PROTEIN SUBUNIT P40"/>
    <property type="match status" value="1"/>
</dbReference>
<dbReference type="PANTHER" id="PTHR15396:SF1">
    <property type="entry name" value="RIBONUCLEASE P PROTEIN SUBUNIT P40"/>
    <property type="match status" value="1"/>
</dbReference>
<dbReference type="Pfam" id="PF08584">
    <property type="entry name" value="Ribonuc_P_40"/>
    <property type="match status" value="1"/>
</dbReference>
<accession>Q5BK64</accession>
<reference key="1">
    <citation type="journal article" date="2004" name="Nature">
        <title>Genome sequence of the Brown Norway rat yields insights into mammalian evolution.</title>
        <authorList>
            <person name="Gibbs R.A."/>
            <person name="Weinstock G.M."/>
            <person name="Metzker M.L."/>
            <person name="Muzny D.M."/>
            <person name="Sodergren E.J."/>
            <person name="Scherer S."/>
            <person name="Scott G."/>
            <person name="Steffen D."/>
            <person name="Worley K.C."/>
            <person name="Burch P.E."/>
            <person name="Okwuonu G."/>
            <person name="Hines S."/>
            <person name="Lewis L."/>
            <person name="Deramo C."/>
            <person name="Delgado O."/>
            <person name="Dugan-Rocha S."/>
            <person name="Miner G."/>
            <person name="Morgan M."/>
            <person name="Hawes A."/>
            <person name="Gill R."/>
            <person name="Holt R.A."/>
            <person name="Adams M.D."/>
            <person name="Amanatides P.G."/>
            <person name="Baden-Tillson H."/>
            <person name="Barnstead M."/>
            <person name="Chin S."/>
            <person name="Evans C.A."/>
            <person name="Ferriera S."/>
            <person name="Fosler C."/>
            <person name="Glodek A."/>
            <person name="Gu Z."/>
            <person name="Jennings D."/>
            <person name="Kraft C.L."/>
            <person name="Nguyen T."/>
            <person name="Pfannkoch C.M."/>
            <person name="Sitter C."/>
            <person name="Sutton G.G."/>
            <person name="Venter J.C."/>
            <person name="Woodage T."/>
            <person name="Smith D."/>
            <person name="Lee H.-M."/>
            <person name="Gustafson E."/>
            <person name="Cahill P."/>
            <person name="Kana A."/>
            <person name="Doucette-Stamm L."/>
            <person name="Weinstock K."/>
            <person name="Fechtel K."/>
            <person name="Weiss R.B."/>
            <person name="Dunn D.M."/>
            <person name="Green E.D."/>
            <person name="Blakesley R.W."/>
            <person name="Bouffard G.G."/>
            <person name="De Jong P.J."/>
            <person name="Osoegawa K."/>
            <person name="Zhu B."/>
            <person name="Marra M."/>
            <person name="Schein J."/>
            <person name="Bosdet I."/>
            <person name="Fjell C."/>
            <person name="Jones S."/>
            <person name="Krzywinski M."/>
            <person name="Mathewson C."/>
            <person name="Siddiqui A."/>
            <person name="Wye N."/>
            <person name="McPherson J."/>
            <person name="Zhao S."/>
            <person name="Fraser C.M."/>
            <person name="Shetty J."/>
            <person name="Shatsman S."/>
            <person name="Geer K."/>
            <person name="Chen Y."/>
            <person name="Abramzon S."/>
            <person name="Nierman W.C."/>
            <person name="Havlak P.H."/>
            <person name="Chen R."/>
            <person name="Durbin K.J."/>
            <person name="Egan A."/>
            <person name="Ren Y."/>
            <person name="Song X.-Z."/>
            <person name="Li B."/>
            <person name="Liu Y."/>
            <person name="Qin X."/>
            <person name="Cawley S."/>
            <person name="Cooney A.J."/>
            <person name="D'Souza L.M."/>
            <person name="Martin K."/>
            <person name="Wu J.Q."/>
            <person name="Gonzalez-Garay M.L."/>
            <person name="Jackson A.R."/>
            <person name="Kalafus K.J."/>
            <person name="McLeod M.P."/>
            <person name="Milosavljevic A."/>
            <person name="Virk D."/>
            <person name="Volkov A."/>
            <person name="Wheeler D.A."/>
            <person name="Zhang Z."/>
            <person name="Bailey J.A."/>
            <person name="Eichler E.E."/>
            <person name="Tuzun E."/>
            <person name="Birney E."/>
            <person name="Mongin E."/>
            <person name="Ureta-Vidal A."/>
            <person name="Woodwark C."/>
            <person name="Zdobnov E."/>
            <person name="Bork P."/>
            <person name="Suyama M."/>
            <person name="Torrents D."/>
            <person name="Alexandersson M."/>
            <person name="Trask B.J."/>
            <person name="Young J.M."/>
            <person name="Huang H."/>
            <person name="Wang H."/>
            <person name="Xing H."/>
            <person name="Daniels S."/>
            <person name="Gietzen D."/>
            <person name="Schmidt J."/>
            <person name="Stevens K."/>
            <person name="Vitt U."/>
            <person name="Wingrove J."/>
            <person name="Camara F."/>
            <person name="Mar Alba M."/>
            <person name="Abril J.F."/>
            <person name="Guigo R."/>
            <person name="Smit A."/>
            <person name="Dubchak I."/>
            <person name="Rubin E.M."/>
            <person name="Couronne O."/>
            <person name="Poliakov A."/>
            <person name="Huebner N."/>
            <person name="Ganten D."/>
            <person name="Goesele C."/>
            <person name="Hummel O."/>
            <person name="Kreitler T."/>
            <person name="Lee Y.-A."/>
            <person name="Monti J."/>
            <person name="Schulz H."/>
            <person name="Zimdahl H."/>
            <person name="Himmelbauer H."/>
            <person name="Lehrach H."/>
            <person name="Jacob H.J."/>
            <person name="Bromberg S."/>
            <person name="Gullings-Handley J."/>
            <person name="Jensen-Seaman M.I."/>
            <person name="Kwitek A.E."/>
            <person name="Lazar J."/>
            <person name="Pasko D."/>
            <person name="Tonellato P.J."/>
            <person name="Twigger S."/>
            <person name="Ponting C.P."/>
            <person name="Duarte J.M."/>
            <person name="Rice S."/>
            <person name="Goodstadt L."/>
            <person name="Beatson S.A."/>
            <person name="Emes R.D."/>
            <person name="Winter E.E."/>
            <person name="Webber C."/>
            <person name="Brandt P."/>
            <person name="Nyakatura G."/>
            <person name="Adetobi M."/>
            <person name="Chiaromonte F."/>
            <person name="Elnitski L."/>
            <person name="Eswara P."/>
            <person name="Hardison R.C."/>
            <person name="Hou M."/>
            <person name="Kolbe D."/>
            <person name="Makova K."/>
            <person name="Miller W."/>
            <person name="Nekrutenko A."/>
            <person name="Riemer C."/>
            <person name="Schwartz S."/>
            <person name="Taylor J."/>
            <person name="Yang S."/>
            <person name="Zhang Y."/>
            <person name="Lindpaintner K."/>
            <person name="Andrews T.D."/>
            <person name="Caccamo M."/>
            <person name="Clamp M."/>
            <person name="Clarke L."/>
            <person name="Curwen V."/>
            <person name="Durbin R.M."/>
            <person name="Eyras E."/>
            <person name="Searle S.M."/>
            <person name="Cooper G.M."/>
            <person name="Batzoglou S."/>
            <person name="Brudno M."/>
            <person name="Sidow A."/>
            <person name="Stone E.A."/>
            <person name="Payseur B.A."/>
            <person name="Bourque G."/>
            <person name="Lopez-Otin C."/>
            <person name="Puente X.S."/>
            <person name="Chakrabarti K."/>
            <person name="Chatterji S."/>
            <person name="Dewey C."/>
            <person name="Pachter L."/>
            <person name="Bray N."/>
            <person name="Yap V.B."/>
            <person name="Caspi A."/>
            <person name="Tesler G."/>
            <person name="Pevzner P.A."/>
            <person name="Haussler D."/>
            <person name="Roskin K.M."/>
            <person name="Baertsch R."/>
            <person name="Clawson H."/>
            <person name="Furey T.S."/>
            <person name="Hinrichs A.S."/>
            <person name="Karolchik D."/>
            <person name="Kent W.J."/>
            <person name="Rosenbloom K.R."/>
            <person name="Trumbower H."/>
            <person name="Weirauch M."/>
            <person name="Cooper D.N."/>
            <person name="Stenson P.D."/>
            <person name="Ma B."/>
            <person name="Brent M."/>
            <person name="Arumugam M."/>
            <person name="Shteynberg D."/>
            <person name="Copley R.R."/>
            <person name="Taylor M.S."/>
            <person name="Riethman H."/>
            <person name="Mudunuri U."/>
            <person name="Peterson J."/>
            <person name="Guyer M."/>
            <person name="Felsenfeld A."/>
            <person name="Old S."/>
            <person name="Mockrin S."/>
            <person name="Collins F.S."/>
        </authorList>
    </citation>
    <scope>NUCLEOTIDE SEQUENCE [LARGE SCALE GENOMIC DNA]</scope>
    <source>
        <strain>Brown Norway</strain>
    </source>
</reference>
<reference key="2">
    <citation type="journal article" date="2004" name="Genome Res.">
        <title>The status, quality, and expansion of the NIH full-length cDNA project: the Mammalian Gene Collection (MGC).</title>
        <authorList>
            <consortium name="The MGC Project Team"/>
        </authorList>
    </citation>
    <scope>NUCLEOTIDE SEQUENCE [LARGE SCALE MRNA] (ISOFORM 2)</scope>
    <source>
        <tissue>Spleen</tissue>
    </source>
</reference>
<gene>
    <name type="primary">Rpp40</name>
</gene>
<sequence length="363" mass="41640">MATLRRLQEAPRHLLVCEKSNFGHDKSRHKHLVETHYHNYRVSFLIPECGLLSKKLKDLVMEMGPYYSVKKLPLHELITHEFINTFVKKGSLSALTYNTSIDEDNTVALLPNGKLILSLDKDTYEETGLQGHPSRYSGRKSMRFIISIDLMDLSLNLDSKKYRRISWSFKEKKPLKFDFLLAWHHTGTEESTMMSYFSKYQIREHQPKVALSTVRDLQCPVLQSSSLAGEPEEACNALEFFDWLGAVFCNADLNNEPHNFISTYCCPQPNTVAAQACLCTITGFVLPEKILVLLEQLCHYFDEPKLAPWVTLTVQGFADSPVAWREKEHGFHKGGEHLYNFVVFNNQDYWLQMAVGANDDCPP</sequence>
<comment type="function">
    <text evidence="1">Component of ribonuclease P, a ribonucleoprotein complex that generates mature tRNA molecules by cleaving their 5'-ends. Also a component of the MRP ribonuclease complex, which cleaves pre-rRNA sequences.</text>
</comment>
<comment type="subunit">
    <text evidence="1">Component of nuclear RNase P and RNase MRP ribonucleoproteins. RNase P consists of a catalytic RNA moiety and about 10 protein subunits; POP1, POP4, POP5, POP7, RPP14, RPP21, RPP25, RPP30, RPP38 and RPP40. Within the RNase P complex, POP1, POP7 and RPP25 form the 'finger' subcomplex, POP5, RPP14, RPP40 and homodimeric RPP30 form the 'palm' subcomplex, and RPP21, POP4 and RPP38 form the 'wrist' subcomplex. All subunits of the RNase P complex interact with the catalytic RNA. Several subunits of RNase P are also part of the RNase MRP complex. RNase MRP consists of a catalytic RNA moiety and about 8 protein subunits; POP1, POP7, RPP25, RPP30, RPP38, RPP40 and possibly also POP4 and POP5.</text>
</comment>
<comment type="subcellular location">
    <subcellularLocation>
        <location evidence="3">Nucleus</location>
        <location evidence="3">Nucleolus</location>
    </subcellularLocation>
</comment>
<comment type="alternative products">
    <event type="alternative splicing"/>
    <isoform>
        <id>Q5BK64-1</id>
        <name>1</name>
        <sequence type="displayed"/>
    </isoform>
    <isoform>
        <id>Q5BK64-2</id>
        <name>2</name>
        <sequence type="described" ref="VSP_037347"/>
    </isoform>
</comment>
<feature type="chain" id="PRO_0000354077" description="Ribonuclease P protein subunit p40">
    <location>
        <begin position="1"/>
        <end position="363"/>
    </location>
</feature>
<feature type="splice variant" id="VSP_037347" description="In isoform 2." evidence="2">
    <location>
        <begin position="1"/>
        <end position="60"/>
    </location>
</feature>
<keyword id="KW-0025">Alternative splicing</keyword>
<keyword id="KW-0539">Nucleus</keyword>
<keyword id="KW-1185">Reference proteome</keyword>
<keyword id="KW-0698">rRNA processing</keyword>
<keyword id="KW-0819">tRNA processing</keyword>
<protein>
    <recommendedName>
        <fullName>Ribonuclease P protein subunit p40</fullName>
        <shortName>RNaseP protein p40</shortName>
    </recommendedName>
</protein>